<accession>Q8MA18</accession>
<comment type="function">
    <text evidence="1">With S4 and S5 plays an important role in translational accuracy. Located at the interface of the 30S and 50S subunits (By similarity).</text>
</comment>
<comment type="subunit">
    <text evidence="1">Part of the 30S ribosomal subunit.</text>
</comment>
<comment type="subcellular location">
    <subcellularLocation>
        <location>Plastid</location>
        <location>Chloroplast</location>
    </subcellularLocation>
</comment>
<comment type="similarity">
    <text evidence="2">Belongs to the universal ribosomal protein uS12 family.</text>
</comment>
<evidence type="ECO:0000250" key="1"/>
<evidence type="ECO:0000305" key="2"/>
<keyword id="KW-0150">Chloroplast</keyword>
<keyword id="KW-0934">Plastid</keyword>
<keyword id="KW-0687">Ribonucleoprotein</keyword>
<keyword id="KW-0689">Ribosomal protein</keyword>
<keyword id="KW-0694">RNA-binding</keyword>
<keyword id="KW-0699">rRNA-binding</keyword>
<sequence>MPTIQQLIRNRREPIENRTKSPALRSCPQRRGVCTRVYTTTPKKPNSALRKVARVRLTSGFEVTAYIPGIGHNLQEHSVVLVRGGRVKDLPGVRYHIVRGTLDSVGVKDRHQGRSKYGAKKPK</sequence>
<reference key="1">
    <citation type="journal article" date="2002" name="Proc. Natl. Acad. Sci. U.S.A.">
        <title>The chloroplast and mitochondrial genome sequences of the charophyte Chaetosphaeridium globosum: insights into the timing of the events that restructured organelle DNAs within the green algal lineage that led to land plants.</title>
        <authorList>
            <person name="Turmel M."/>
            <person name="Otis C."/>
            <person name="Lemieux C."/>
        </authorList>
    </citation>
    <scope>NUCLEOTIDE SEQUENCE [LARGE SCALE GENOMIC DNA]</scope>
    <source>
        <strain>M1311</strain>
    </source>
</reference>
<name>RR12_CHAGL</name>
<gene>
    <name type="primary">rps12</name>
</gene>
<dbReference type="EMBL" id="AF494278">
    <property type="protein sequence ID" value="AAM96595.1"/>
    <property type="molecule type" value="Genomic_DNA"/>
</dbReference>
<dbReference type="RefSeq" id="NP_683767.1">
    <property type="nucleotide sequence ID" value="NC_004115.1"/>
</dbReference>
<dbReference type="SMR" id="Q8MA18"/>
<dbReference type="GeneID" id="860795"/>
<dbReference type="GO" id="GO:0009507">
    <property type="term" value="C:chloroplast"/>
    <property type="evidence" value="ECO:0007669"/>
    <property type="project" value="UniProtKB-SubCell"/>
</dbReference>
<dbReference type="GO" id="GO:0015935">
    <property type="term" value="C:small ribosomal subunit"/>
    <property type="evidence" value="ECO:0007669"/>
    <property type="project" value="InterPro"/>
</dbReference>
<dbReference type="GO" id="GO:0019843">
    <property type="term" value="F:rRNA binding"/>
    <property type="evidence" value="ECO:0007669"/>
    <property type="project" value="UniProtKB-UniRule"/>
</dbReference>
<dbReference type="GO" id="GO:0003735">
    <property type="term" value="F:structural constituent of ribosome"/>
    <property type="evidence" value="ECO:0007669"/>
    <property type="project" value="InterPro"/>
</dbReference>
<dbReference type="GO" id="GO:0006412">
    <property type="term" value="P:translation"/>
    <property type="evidence" value="ECO:0007669"/>
    <property type="project" value="UniProtKB-UniRule"/>
</dbReference>
<dbReference type="CDD" id="cd03368">
    <property type="entry name" value="Ribosomal_S12"/>
    <property type="match status" value="1"/>
</dbReference>
<dbReference type="FunFam" id="2.40.50.140:FF:000008">
    <property type="entry name" value="30S ribosomal protein S12, chloroplastic"/>
    <property type="match status" value="1"/>
</dbReference>
<dbReference type="Gene3D" id="2.40.50.140">
    <property type="entry name" value="Nucleic acid-binding proteins"/>
    <property type="match status" value="1"/>
</dbReference>
<dbReference type="HAMAP" id="MF_00403_B">
    <property type="entry name" value="Ribosomal_uS12_B"/>
    <property type="match status" value="1"/>
</dbReference>
<dbReference type="InterPro" id="IPR012340">
    <property type="entry name" value="NA-bd_OB-fold"/>
</dbReference>
<dbReference type="InterPro" id="IPR006032">
    <property type="entry name" value="Ribosomal_uS12"/>
</dbReference>
<dbReference type="InterPro" id="IPR005679">
    <property type="entry name" value="Ribosomal_uS12_bac"/>
</dbReference>
<dbReference type="NCBIfam" id="TIGR00981">
    <property type="entry name" value="rpsL_bact"/>
    <property type="match status" value="1"/>
</dbReference>
<dbReference type="PANTHER" id="PTHR11652">
    <property type="entry name" value="30S RIBOSOMAL PROTEIN S12 FAMILY MEMBER"/>
    <property type="match status" value="1"/>
</dbReference>
<dbReference type="Pfam" id="PF00164">
    <property type="entry name" value="Ribosom_S12_S23"/>
    <property type="match status" value="1"/>
</dbReference>
<dbReference type="PIRSF" id="PIRSF002133">
    <property type="entry name" value="Ribosomal_S12/S23"/>
    <property type="match status" value="1"/>
</dbReference>
<dbReference type="PRINTS" id="PR01034">
    <property type="entry name" value="RIBOSOMALS12"/>
</dbReference>
<dbReference type="SUPFAM" id="SSF50249">
    <property type="entry name" value="Nucleic acid-binding proteins"/>
    <property type="match status" value="1"/>
</dbReference>
<dbReference type="PROSITE" id="PS00055">
    <property type="entry name" value="RIBOSOMAL_S12"/>
    <property type="match status" value="1"/>
</dbReference>
<protein>
    <recommendedName>
        <fullName evidence="2">Small ribosomal subunit protein uS12c</fullName>
    </recommendedName>
    <alternativeName>
        <fullName>30S ribosomal protein S12, chloroplastic</fullName>
    </alternativeName>
</protein>
<organism>
    <name type="scientific">Chaetosphaeridium globosum</name>
    <name type="common">Charophycean green alga</name>
    <name type="synonym">Herposteiron globosum</name>
    <dbReference type="NCBI Taxonomy" id="96477"/>
    <lineage>
        <taxon>Eukaryota</taxon>
        <taxon>Viridiplantae</taxon>
        <taxon>Streptophyta</taxon>
        <taxon>Coleochaetophyceae</taxon>
        <taxon>Coleochaetales</taxon>
        <taxon>Chaetosphaeridiaceae</taxon>
        <taxon>Chaetosphaeridium</taxon>
    </lineage>
</organism>
<feature type="chain" id="PRO_0000146395" description="Small ribosomal subunit protein uS12c">
    <location>
        <begin position="1"/>
        <end position="123"/>
    </location>
</feature>
<geneLocation type="chloroplast"/>
<proteinExistence type="inferred from homology"/>